<protein>
    <recommendedName>
        <fullName evidence="6">Immunity-related GTPase family M protein</fullName>
        <ecNumber evidence="2">3.6.5.-</ecNumber>
    </recommendedName>
</protein>
<evidence type="ECO:0000250" key="1">
    <source>
        <dbReference type="UniProtKB" id="A1A4Y4"/>
    </source>
</evidence>
<evidence type="ECO:0000250" key="2">
    <source>
        <dbReference type="UniProtKB" id="Q60766"/>
    </source>
</evidence>
<evidence type="ECO:0000250" key="3">
    <source>
        <dbReference type="UniProtKB" id="Q9QZ85"/>
    </source>
</evidence>
<evidence type="ECO:0000255" key="4">
    <source>
        <dbReference type="PROSITE-ProRule" id="PRU01053"/>
    </source>
</evidence>
<evidence type="ECO:0000256" key="5">
    <source>
        <dbReference type="SAM" id="MobiDB-lite"/>
    </source>
</evidence>
<evidence type="ECO:0000305" key="6"/>
<evidence type="ECO:0000312" key="7">
    <source>
        <dbReference type="RGD" id="1305163"/>
    </source>
</evidence>
<gene>
    <name evidence="7" type="primary">Irgm</name>
</gene>
<comment type="function">
    <text evidence="1 2">Immunity-related GTPase that plays important roles in innate immunity and inflammatory response (By similarity). Acts as a dynamin-like protein that binds to intracellular membranes and promotes remodeling and trafficking of those membranes (By similarity). Required for clearance of acute protozoan and bacterial infections by interacting with autophagy and lysosome regulatory proteins, thereby promoting the fusion of phagosomes with lysosomes for efficient degradation of cargo including microbes (By similarity). Regulates selective autophagy, including xenophagy and mitophagy, both directly and indirectly (By similarity). Directly regulates autophagy by acting as a molecular adapter that promotes the coassembly of the core autophagy machinery to mediate antimicrobial defense: Irgm (1) activates AMPK, which in turn phosphorylates ULK1 and BECN1 to induce autophagy, (2) promotes the coassembly of ULK1 and BECN1, enhancing BECN1-interacting partners and (3) influences the composition of the BECN1 complex, by competing with the negative regulators BCL2 and RUBCN, to trigger autophagy (By similarity). Also activates autophagy by promoting recruitment of STX17 to autophagosomes (By similarity). In collaboration with ATG8 proteins, regulate lysosomal biogenesis, a fundamental process for any autophagic pathway, by promoting TFEB dephosphorylation (By similarity). Also modulates autophagy by assisting with autophagosome formation and preventing lysosomal deacidification (By similarity). Regulates autophagy by affecting mitochondrial fusion and fission (By similarity). Also involved in M1 macrophage activation for the production of proinflammatory cytokines (By similarity). While activating autophagy, acts as a key negative regulator of the inflammatory and interferon responses both by (1) promoting mitophagy and (2) mediating autophagy-dependent degradation of effectors of the inflammatory response (By similarity). Promotes degradation of damaged and IFNG/IFN-gamma-stressed mitochondria via mitophagy, preventing cytosolic release of ligands that activate inflammation (By similarity). Negatively regulates interferon-signaling in hematopoietic stem cells, preserving hematopoietic stem cell number and function (By similarity). Promotes expansion of activated CD4(+) T-cells by inhibiting IFNG/IFN-gamma signaling, thereby preventing Ifng-mediated cell death of CD4(+) T-cells (By similarity). Acts as a suppressor of inflammation by promoting recruitment of inflammation effectors, such as CGAS, RIGI/RIG-I and NLRP3, to autophagosome membranes, leading to their SQSTM1/p62-dependent autophagic degradation (By similarity). Also directly inhibits assembly of the NLRP3 inflammasome by preventing the association between NLRP3 and PYCARD (By similarity). Acts as a negative regulator of antiviral innate immune response by suppressing the RIPK2-dependent pro-inflammatory response: mediates recruitment of RIPosomes, composed of RIPK2 and NOD1 or NOD2, to autophagosome membranes, promoting their SQSTM1/p62-dependent autophagic degradation (By similarity).</text>
</comment>
<comment type="catalytic activity">
    <reaction evidence="2">
        <text>GTP + H2O = GDP + phosphate + H(+)</text>
        <dbReference type="Rhea" id="RHEA:19669"/>
        <dbReference type="ChEBI" id="CHEBI:15377"/>
        <dbReference type="ChEBI" id="CHEBI:15378"/>
        <dbReference type="ChEBI" id="CHEBI:37565"/>
        <dbReference type="ChEBI" id="CHEBI:43474"/>
        <dbReference type="ChEBI" id="CHEBI:58189"/>
    </reaction>
    <physiologicalReaction direction="left-to-right" evidence="2">
        <dbReference type="Rhea" id="RHEA:19670"/>
    </physiologicalReaction>
</comment>
<comment type="subunit">
    <text evidence="1 2">Interacts with ULK1; promoting the coassembly of ULK1 and BECN1 (By similarity). Interacts with BECN1; enhancing BECN1-interacting partners and influencing the composition of the BECN1 complex (By similarity). Interacts with ATG16L1 (By similarity). Interacts with NOD2; promoting Irgm 'Lys-63'-linked polyubiquitination, which is required for interactions with the core autophagy factors (By similarity). Interacts with STX17; promoting STX17 recruitment to autophagosomes (By similarity). Interacts with ATG8 proteins (GABARAP, GABARAPL1, GABARAPL2, MAP1LC3A, MAP1LC3B and MAP1LC3C); promoting STX17 recruitment to autophagosomes (By similarity). Interacts with TFEB; promoting association between TFEB and PPP3CB and TFEB dephosphorylation (By similarity). Interacts with PPP3CB; promoting association between TFEB and PPP3CB and TFEB dephosphorylation (By similarity). Interacts with NLRP3; preventing NLRP3 inflammasome assembly and promoting SQSTM1/p62-dependent autophagic degradation of NLRP3 (By similarity). Interacts with CGAS; promoting SQSTM1/p62-dependent autophagic degradation of CGAS (By similarity). Interacts with RIGI/RIG-I; promoting SQSTM1/p62-dependent autophagic degradation of RIGI/RIG-I (By similarity). Interacts with NOD1; promoting SQSTM1/p62-dependent autophagic degradation of RIGI/RIG-I (By similarity). Interacts with NOD2; promoting SQSTM1/p62-dependent autophagic degradation of RIGI/RIG-I (By similarity). Interacts with RIPK2; promoting SQSTM1/p62-dependent autophagic degradation of RIGI/RIG-I (By similarity). Interacts with PIK3CA (By similarity).</text>
</comment>
<comment type="subcellular location">
    <subcellularLocation>
        <location evidence="2">Golgi apparatus membrane</location>
    </subcellularLocation>
    <subcellularLocation>
        <location evidence="2">Cell membrane</location>
    </subcellularLocation>
    <subcellularLocation>
        <location evidence="2">Cytoplasmic vesicle</location>
        <location evidence="2">Phagosome membrane</location>
    </subcellularLocation>
    <subcellularLocation>
        <location evidence="2">Cytoplasmic vesicle</location>
        <location evidence="2">Autophagosome membrane</location>
    </subcellularLocation>
    <subcellularLocation>
        <location evidence="2">Lysosome membrane</location>
    </subcellularLocation>
    <subcellularLocation>
        <location evidence="2">Late endosome membrane</location>
    </subcellularLocation>
    <subcellularLocation>
        <location evidence="2">Mitochondrion membrane</location>
    </subcellularLocation>
    <subcellularLocation>
        <location evidence="2">Cell projection</location>
        <location evidence="2">Phagocytic cup</location>
    </subcellularLocation>
    <text evidence="2">Behaves like an integral membrane protein. Recruited to the plasma membrane around forming phagocytic cups, it remains associated with maturing phagosomes. Association with phagosomes is dependent on nucleotide-binding but is IFNG-independent. Also detected in late endosomes and lysosomes: lysosomal localization is IFN-gamma-induced during bacterial infections such as S.typhimurium infection.</text>
</comment>
<comment type="domain">
    <text evidence="2">The alpha-K amphipathic helix mediates targeting to the phagosome membrane via binding to phosphatidylinositol-3,4-bisphosphate (PtdIns(3,4)P2) and phosphatidylinositol-3,4,5-trisphosphate (PtdIns(3,4,5)P3).</text>
</comment>
<comment type="PTM">
    <text evidence="2">Palmitoylated on C-terminal Cys residues. Palmitoylation, together with the alpha-K amphipathic helix, which binds phosphatidylinositol, mediate binding to membranes.</text>
</comment>
<comment type="PTM">
    <text evidence="1 2">Ubiquitinated via 'Lys-63'-linked polyubiquitination in a NOD2-dependent process. 'Lys-63'-linked polyubiquitination is required for interactions with the core autophagy factors (By similarity). Ubiquitination at Lys-272 by the DCX(WDR77) complex, also named CLR4(WDR77) complex, in intestinal cells, leading to its degradation by the proteasome (By similarity).</text>
</comment>
<comment type="similarity">
    <text evidence="4">Belongs to the TRAFAC class dynamin-like GTPase superfamily. IRG family.</text>
</comment>
<sequence>MKPSHKSCEAAPLLPKMPETSTHNAPLNLSFPSVPSYQIGCSSLPEISRSTERALKEGKLPELVYGVKETVATLSQIPVSIFVTGDSGNGMSSFINALRIIGHEEDASAPTGVVRTTQTRAEYSSSHFPNVVLWDLPGLGATAQTVENYIEEMKFSTCDLFIIVASEQFSSNHVKLAKIIQSMGKRFYVIWTKLDRDLSTSVLSEVRLIQNIQENIRENLQKEGVKEVPIFLVSNLDPLLHDFPELRNTLQTDLSNIRCCEPLKTLYVIYEKIIGDKVANWNQIIANGRLKSSLGVRDDDDMGECLKRYRLIFGIDDESLQQIAHGMGTVVMEYKANIKSQDFHTLRRADWKLRLMTCTTVNALFCLFKFLPCLCHCFKRMRHKRMLLLVAKDTKNILKKILMDAVSPPQI</sequence>
<proteinExistence type="evidence at transcript level"/>
<accession>Q6AYC2</accession>
<organism>
    <name type="scientific">Rattus norvegicus</name>
    <name type="common">Rat</name>
    <dbReference type="NCBI Taxonomy" id="10116"/>
    <lineage>
        <taxon>Eukaryota</taxon>
        <taxon>Metazoa</taxon>
        <taxon>Chordata</taxon>
        <taxon>Craniata</taxon>
        <taxon>Vertebrata</taxon>
        <taxon>Euteleostomi</taxon>
        <taxon>Mammalia</taxon>
        <taxon>Eutheria</taxon>
        <taxon>Euarchontoglires</taxon>
        <taxon>Glires</taxon>
        <taxon>Rodentia</taxon>
        <taxon>Myomorpha</taxon>
        <taxon>Muroidea</taxon>
        <taxon>Muridae</taxon>
        <taxon>Murinae</taxon>
        <taxon>Rattus</taxon>
    </lineage>
</organism>
<dbReference type="EC" id="3.6.5.-" evidence="2"/>
<dbReference type="EMBL" id="BC079106">
    <property type="protein sequence ID" value="AAH79106.1"/>
    <property type="molecule type" value="mRNA"/>
</dbReference>
<dbReference type="RefSeq" id="NP_001012007.1">
    <property type="nucleotide sequence ID" value="NM_001012007.1"/>
</dbReference>
<dbReference type="RefSeq" id="XP_006246240.1">
    <property type="nucleotide sequence ID" value="XM_006246178.4"/>
</dbReference>
<dbReference type="SMR" id="Q6AYC2"/>
<dbReference type="FunCoup" id="Q6AYC2">
    <property type="interactions" value="159"/>
</dbReference>
<dbReference type="IntAct" id="Q6AYC2">
    <property type="interactions" value="1"/>
</dbReference>
<dbReference type="STRING" id="10116.ENSRNOP00000047579"/>
<dbReference type="PhosphoSitePlus" id="Q6AYC2"/>
<dbReference type="SwissPalm" id="Q6AYC2"/>
<dbReference type="PaxDb" id="10116-ENSRNOP00000047579"/>
<dbReference type="Ensembl" id="ENSRNOT00000045545.4">
    <property type="protein sequence ID" value="ENSRNOP00000047579.2"/>
    <property type="gene ID" value="ENSRNOG00000031138.4"/>
</dbReference>
<dbReference type="GeneID" id="303090"/>
<dbReference type="KEGG" id="rno:303090"/>
<dbReference type="UCSC" id="RGD:1305163">
    <property type="organism name" value="rat"/>
</dbReference>
<dbReference type="AGR" id="RGD:1305163"/>
<dbReference type="CTD" id="345611"/>
<dbReference type="RGD" id="1305163">
    <property type="gene designation" value="Irgm"/>
</dbReference>
<dbReference type="eggNOG" id="ENOG502QS9R">
    <property type="taxonomic scope" value="Eukaryota"/>
</dbReference>
<dbReference type="GeneTree" id="ENSGT00950000183007"/>
<dbReference type="HOGENOM" id="CLU_015342_3_0_1"/>
<dbReference type="InParanoid" id="Q6AYC2"/>
<dbReference type="OMA" id="SCMNCNT"/>
<dbReference type="OrthoDB" id="422720at2759"/>
<dbReference type="PhylomeDB" id="Q6AYC2"/>
<dbReference type="TreeFam" id="TF331897"/>
<dbReference type="PRO" id="PR:Q6AYC2"/>
<dbReference type="Proteomes" id="UP000002494">
    <property type="component" value="Chromosome 10"/>
</dbReference>
<dbReference type="Bgee" id="ENSRNOG00000031138">
    <property type="expression patterns" value="Expressed in skeletal muscle tissue and 18 other cell types or tissues"/>
</dbReference>
<dbReference type="GO" id="GO:0044754">
    <property type="term" value="C:autolysosome"/>
    <property type="evidence" value="ECO:0000266"/>
    <property type="project" value="RGD"/>
</dbReference>
<dbReference type="GO" id="GO:0005776">
    <property type="term" value="C:autophagosome"/>
    <property type="evidence" value="ECO:0000266"/>
    <property type="project" value="RGD"/>
</dbReference>
<dbReference type="GO" id="GO:0000421">
    <property type="term" value="C:autophagosome membrane"/>
    <property type="evidence" value="ECO:0000266"/>
    <property type="project" value="RGD"/>
</dbReference>
<dbReference type="GO" id="GO:0042995">
    <property type="term" value="C:cell projection"/>
    <property type="evidence" value="ECO:0007669"/>
    <property type="project" value="UniProtKB-KW"/>
</dbReference>
<dbReference type="GO" id="GO:0005829">
    <property type="term" value="C:cytosol"/>
    <property type="evidence" value="ECO:0000266"/>
    <property type="project" value="RGD"/>
</dbReference>
<dbReference type="GO" id="GO:0005789">
    <property type="term" value="C:endoplasmic reticulum membrane"/>
    <property type="evidence" value="ECO:0000318"/>
    <property type="project" value="GO_Central"/>
</dbReference>
<dbReference type="GO" id="GO:0005794">
    <property type="term" value="C:Golgi apparatus"/>
    <property type="evidence" value="ECO:0000266"/>
    <property type="project" value="RGD"/>
</dbReference>
<dbReference type="GO" id="GO:0000139">
    <property type="term" value="C:Golgi membrane"/>
    <property type="evidence" value="ECO:0000250"/>
    <property type="project" value="UniProtKB"/>
</dbReference>
<dbReference type="GO" id="GO:0005770">
    <property type="term" value="C:late endosome"/>
    <property type="evidence" value="ECO:0000266"/>
    <property type="project" value="RGD"/>
</dbReference>
<dbReference type="GO" id="GO:0031902">
    <property type="term" value="C:late endosome membrane"/>
    <property type="evidence" value="ECO:0007669"/>
    <property type="project" value="UniProtKB-SubCell"/>
</dbReference>
<dbReference type="GO" id="GO:0005765">
    <property type="term" value="C:lysosomal membrane"/>
    <property type="evidence" value="ECO:0000250"/>
    <property type="project" value="UniProtKB"/>
</dbReference>
<dbReference type="GO" id="GO:0005764">
    <property type="term" value="C:lysosome"/>
    <property type="evidence" value="ECO:0000266"/>
    <property type="project" value="RGD"/>
</dbReference>
<dbReference type="GO" id="GO:0031966">
    <property type="term" value="C:mitochondrial membrane"/>
    <property type="evidence" value="ECO:0000250"/>
    <property type="project" value="UniProtKB"/>
</dbReference>
<dbReference type="GO" id="GO:0005739">
    <property type="term" value="C:mitochondrion"/>
    <property type="evidence" value="ECO:0000266"/>
    <property type="project" value="RGD"/>
</dbReference>
<dbReference type="GO" id="GO:0001891">
    <property type="term" value="C:phagocytic cup"/>
    <property type="evidence" value="ECO:0007669"/>
    <property type="project" value="UniProtKB-SubCell"/>
</dbReference>
<dbReference type="GO" id="GO:0045335">
    <property type="term" value="C:phagocytic vesicle"/>
    <property type="evidence" value="ECO:0000266"/>
    <property type="project" value="RGD"/>
</dbReference>
<dbReference type="GO" id="GO:0030670">
    <property type="term" value="C:phagocytic vesicle membrane"/>
    <property type="evidence" value="ECO:0007669"/>
    <property type="project" value="UniProtKB-SubCell"/>
</dbReference>
<dbReference type="GO" id="GO:0051434">
    <property type="term" value="F:BH3 domain binding"/>
    <property type="evidence" value="ECO:0000266"/>
    <property type="project" value="RGD"/>
</dbReference>
<dbReference type="GO" id="GO:0050700">
    <property type="term" value="F:CARD domain binding"/>
    <property type="evidence" value="ECO:0000266"/>
    <property type="project" value="RGD"/>
</dbReference>
<dbReference type="GO" id="GO:1901612">
    <property type="term" value="F:cardiolipin binding"/>
    <property type="evidence" value="ECO:0000266"/>
    <property type="project" value="RGD"/>
</dbReference>
<dbReference type="GO" id="GO:0003925">
    <property type="term" value="F:G protein activity"/>
    <property type="evidence" value="ECO:0000266"/>
    <property type="project" value="RGD"/>
</dbReference>
<dbReference type="GO" id="GO:0005525">
    <property type="term" value="F:GTP binding"/>
    <property type="evidence" value="ECO:0007669"/>
    <property type="project" value="UniProtKB-KW"/>
</dbReference>
<dbReference type="GO" id="GO:0003924">
    <property type="term" value="F:GTPase activity"/>
    <property type="evidence" value="ECO:0000250"/>
    <property type="project" value="UniProtKB"/>
</dbReference>
<dbReference type="GO" id="GO:0005547">
    <property type="term" value="F:phosphatidylinositol-3,4,5-trisphosphate binding"/>
    <property type="evidence" value="ECO:0000266"/>
    <property type="project" value="RGD"/>
</dbReference>
<dbReference type="GO" id="GO:0043325">
    <property type="term" value="F:phosphatidylinositol-3,4-bisphosphate binding"/>
    <property type="evidence" value="ECO:0000266"/>
    <property type="project" value="RGD"/>
</dbReference>
<dbReference type="GO" id="GO:0019901">
    <property type="term" value="F:protein kinase binding"/>
    <property type="evidence" value="ECO:0000266"/>
    <property type="project" value="RGD"/>
</dbReference>
<dbReference type="GO" id="GO:0043539">
    <property type="term" value="F:protein serine/threonine kinase activator activity"/>
    <property type="evidence" value="ECO:0000266"/>
    <property type="project" value="RGD"/>
</dbReference>
<dbReference type="GO" id="GO:0030674">
    <property type="term" value="F:protein-macromolecule adaptor activity"/>
    <property type="evidence" value="ECO:0000266"/>
    <property type="project" value="RGD"/>
</dbReference>
<dbReference type="GO" id="GO:0000045">
    <property type="term" value="P:autophagosome assembly"/>
    <property type="evidence" value="ECO:0000266"/>
    <property type="project" value="RGD"/>
</dbReference>
<dbReference type="GO" id="GO:0097352">
    <property type="term" value="P:autophagosome maturation"/>
    <property type="evidence" value="ECO:0000250"/>
    <property type="project" value="UniProtKB"/>
</dbReference>
<dbReference type="GO" id="GO:0061762">
    <property type="term" value="P:CAMKK-AMPK signaling cascade"/>
    <property type="evidence" value="ECO:0000266"/>
    <property type="project" value="RGD"/>
</dbReference>
<dbReference type="GO" id="GO:0035458">
    <property type="term" value="P:cellular response to interferon-beta"/>
    <property type="evidence" value="ECO:0000318"/>
    <property type="project" value="GO_Central"/>
</dbReference>
<dbReference type="GO" id="GO:0071222">
    <property type="term" value="P:cellular response to lipopolysaccharide"/>
    <property type="evidence" value="ECO:0000266"/>
    <property type="project" value="RGD"/>
</dbReference>
<dbReference type="GO" id="GO:0071346">
    <property type="term" value="P:cellular response to type II interferon"/>
    <property type="evidence" value="ECO:0000266"/>
    <property type="project" value="RGD"/>
</dbReference>
<dbReference type="GO" id="GO:0006952">
    <property type="term" value="P:defense response"/>
    <property type="evidence" value="ECO:0000266"/>
    <property type="project" value="RGD"/>
</dbReference>
<dbReference type="GO" id="GO:0042742">
    <property type="term" value="P:defense response to bacterium"/>
    <property type="evidence" value="ECO:0000250"/>
    <property type="project" value="UniProtKB"/>
</dbReference>
<dbReference type="GO" id="GO:0050829">
    <property type="term" value="P:defense response to Gram-negative bacterium"/>
    <property type="evidence" value="ECO:0000266"/>
    <property type="project" value="RGD"/>
</dbReference>
<dbReference type="GO" id="GO:0045087">
    <property type="term" value="P:innate immune response"/>
    <property type="evidence" value="ECO:0000250"/>
    <property type="project" value="UniProtKB"/>
</dbReference>
<dbReference type="GO" id="GO:0043124">
    <property type="term" value="P:negative regulation of canonical NF-kappaB signal transduction"/>
    <property type="evidence" value="ECO:0000266"/>
    <property type="project" value="RGD"/>
</dbReference>
<dbReference type="GO" id="GO:0160049">
    <property type="term" value="P:negative regulation of cGAS/STING signaling pathway"/>
    <property type="evidence" value="ECO:0000266"/>
    <property type="project" value="RGD"/>
</dbReference>
<dbReference type="GO" id="GO:0050687">
    <property type="term" value="P:negative regulation of defense response to virus"/>
    <property type="evidence" value="ECO:0000250"/>
    <property type="project" value="UniProtKB"/>
</dbReference>
<dbReference type="GO" id="GO:1902034">
    <property type="term" value="P:negative regulation of hematopoietic stem cell proliferation"/>
    <property type="evidence" value="ECO:0000250"/>
    <property type="project" value="UniProtKB"/>
</dbReference>
<dbReference type="GO" id="GO:0050728">
    <property type="term" value="P:negative regulation of inflammatory response"/>
    <property type="evidence" value="ECO:0000250"/>
    <property type="project" value="UniProtKB"/>
</dbReference>
<dbReference type="GO" id="GO:1900226">
    <property type="term" value="P:negative regulation of NLRP3 inflammasome complex assembly"/>
    <property type="evidence" value="ECO:0000250"/>
    <property type="project" value="UniProtKB"/>
</dbReference>
<dbReference type="GO" id="GO:0032480">
    <property type="term" value="P:negative regulation of type I interferon production"/>
    <property type="evidence" value="ECO:0000250"/>
    <property type="project" value="UniProtKB"/>
</dbReference>
<dbReference type="GO" id="GO:0032689">
    <property type="term" value="P:negative regulation of type II interferon production"/>
    <property type="evidence" value="ECO:0000250"/>
    <property type="project" value="UniProtKB"/>
</dbReference>
<dbReference type="GO" id="GO:0070431">
    <property type="term" value="P:nucleotide-binding oligomerization domain containing 2 signaling pathway"/>
    <property type="evidence" value="ECO:0000266"/>
    <property type="project" value="RGD"/>
</dbReference>
<dbReference type="GO" id="GO:1901098">
    <property type="term" value="P:positive regulation of autophagosome maturation"/>
    <property type="evidence" value="ECO:0000266"/>
    <property type="project" value="RGD"/>
</dbReference>
<dbReference type="GO" id="GO:0010508">
    <property type="term" value="P:positive regulation of autophagy"/>
    <property type="evidence" value="ECO:0000250"/>
    <property type="project" value="UniProtKB"/>
</dbReference>
<dbReference type="GO" id="GO:2000563">
    <property type="term" value="P:positive regulation of CD4-positive, alpha-beta T cell proliferation"/>
    <property type="evidence" value="ECO:0000250"/>
    <property type="project" value="UniProtKB"/>
</dbReference>
<dbReference type="GO" id="GO:1905673">
    <property type="term" value="P:positive regulation of lysosome organization"/>
    <property type="evidence" value="ECO:0000266"/>
    <property type="project" value="RGD"/>
</dbReference>
<dbReference type="GO" id="GO:0043032">
    <property type="term" value="P:positive regulation of macrophage activation"/>
    <property type="evidence" value="ECO:0000250"/>
    <property type="project" value="UniProtKB"/>
</dbReference>
<dbReference type="GO" id="GO:1901526">
    <property type="term" value="P:positive regulation of mitophagy"/>
    <property type="evidence" value="ECO:0000250"/>
    <property type="project" value="UniProtKB"/>
</dbReference>
<dbReference type="GO" id="GO:0060335">
    <property type="term" value="P:positive regulation of type II interferon-mediated signaling pathway"/>
    <property type="evidence" value="ECO:0000266"/>
    <property type="project" value="RGD"/>
</dbReference>
<dbReference type="GO" id="GO:1904417">
    <property type="term" value="P:positive regulation of xenophagy"/>
    <property type="evidence" value="ECO:0000266"/>
    <property type="project" value="RGD"/>
</dbReference>
<dbReference type="GO" id="GO:0031648">
    <property type="term" value="P:protein destabilization"/>
    <property type="evidence" value="ECO:0000266"/>
    <property type="project" value="RGD"/>
</dbReference>
<dbReference type="GO" id="GO:0050821">
    <property type="term" value="P:protein stabilization"/>
    <property type="evidence" value="ECO:0000266"/>
    <property type="project" value="RGD"/>
</dbReference>
<dbReference type="GO" id="GO:0071211">
    <property type="term" value="P:protein targeting to vacuole involved in autophagy"/>
    <property type="evidence" value="ECO:0000266"/>
    <property type="project" value="RGD"/>
</dbReference>
<dbReference type="GO" id="GO:0065003">
    <property type="term" value="P:protein-containing complex assembly"/>
    <property type="evidence" value="ECO:0000266"/>
    <property type="project" value="RGD"/>
</dbReference>
<dbReference type="GO" id="GO:0090140">
    <property type="term" value="P:regulation of mitochondrial fission"/>
    <property type="evidence" value="ECO:0000250"/>
    <property type="project" value="UniProtKB"/>
</dbReference>
<dbReference type="GO" id="GO:0061635">
    <property type="term" value="P:regulation of protein complex stability"/>
    <property type="evidence" value="ECO:0000266"/>
    <property type="project" value="RGD"/>
</dbReference>
<dbReference type="GO" id="GO:0043254">
    <property type="term" value="P:regulation of protein-containing complex assembly"/>
    <property type="evidence" value="ECO:0000266"/>
    <property type="project" value="RGD"/>
</dbReference>
<dbReference type="GO" id="GO:0009617">
    <property type="term" value="P:response to bacterium"/>
    <property type="evidence" value="ECO:0000266"/>
    <property type="project" value="RGD"/>
</dbReference>
<dbReference type="CDD" id="cd04104">
    <property type="entry name" value="p47_IIGP_like"/>
    <property type="match status" value="1"/>
</dbReference>
<dbReference type="FunFam" id="3.40.50.300:FF:000541">
    <property type="entry name" value="Immunity related GTPase M"/>
    <property type="match status" value="1"/>
</dbReference>
<dbReference type="Gene3D" id="3.40.50.300">
    <property type="entry name" value="P-loop containing nucleotide triphosphate hydrolases"/>
    <property type="match status" value="1"/>
</dbReference>
<dbReference type="InterPro" id="IPR030385">
    <property type="entry name" value="G_IRG_dom"/>
</dbReference>
<dbReference type="InterPro" id="IPR007743">
    <property type="entry name" value="Immunity-related_GTPase-like"/>
</dbReference>
<dbReference type="InterPro" id="IPR051515">
    <property type="entry name" value="IRG"/>
</dbReference>
<dbReference type="InterPro" id="IPR027417">
    <property type="entry name" value="P-loop_NTPase"/>
</dbReference>
<dbReference type="PANTHER" id="PTHR32341:SF9">
    <property type="entry name" value="IMMUNITY-RELATED GTPASE FAMILY M PROTEIN"/>
    <property type="match status" value="1"/>
</dbReference>
<dbReference type="PANTHER" id="PTHR32341">
    <property type="entry name" value="INTERFERON-INDUCIBLE GTPASE"/>
    <property type="match status" value="1"/>
</dbReference>
<dbReference type="Pfam" id="PF05049">
    <property type="entry name" value="IIGP"/>
    <property type="match status" value="1"/>
</dbReference>
<dbReference type="SUPFAM" id="SSF52540">
    <property type="entry name" value="P-loop containing nucleoside triphosphate hydrolases"/>
    <property type="match status" value="1"/>
</dbReference>
<dbReference type="PROSITE" id="PS51716">
    <property type="entry name" value="G_IRG"/>
    <property type="match status" value="1"/>
</dbReference>
<keyword id="KW-0072">Autophagy</keyword>
<keyword id="KW-1003">Cell membrane</keyword>
<keyword id="KW-0966">Cell projection</keyword>
<keyword id="KW-0968">Cytoplasmic vesicle</keyword>
<keyword id="KW-0967">Endosome</keyword>
<keyword id="KW-0333">Golgi apparatus</keyword>
<keyword id="KW-0342">GTP-binding</keyword>
<keyword id="KW-0378">Hydrolase</keyword>
<keyword id="KW-0391">Immunity</keyword>
<keyword id="KW-0399">Innate immunity</keyword>
<keyword id="KW-1017">Isopeptide bond</keyword>
<keyword id="KW-0446">Lipid-binding</keyword>
<keyword id="KW-0449">Lipoprotein</keyword>
<keyword id="KW-0458">Lysosome</keyword>
<keyword id="KW-0472">Membrane</keyword>
<keyword id="KW-0496">Mitochondrion</keyword>
<keyword id="KW-0547">Nucleotide-binding</keyword>
<keyword id="KW-0564">Palmitate</keyword>
<keyword id="KW-0597">Phosphoprotein</keyword>
<keyword id="KW-1185">Reference proteome</keyword>
<keyword id="KW-0832">Ubl conjugation</keyword>
<name>IRGM_RAT</name>
<feature type="chain" id="PRO_0000325751" description="Immunity-related GTPase family M protein">
    <location>
        <begin position="1"/>
        <end position="411"/>
    </location>
</feature>
<feature type="domain" description="IRG-type G" evidence="4">
    <location>
        <begin position="77"/>
        <end position="253"/>
    </location>
</feature>
<feature type="region of interest" description="Disordered" evidence="5">
    <location>
        <begin position="1"/>
        <end position="21"/>
    </location>
</feature>
<feature type="region of interest" description="Alpha-K amphipathic helix" evidence="2">
    <location>
        <begin position="352"/>
        <end position="376"/>
    </location>
</feature>
<feature type="binding site" evidence="3">
    <location>
        <begin position="86"/>
        <end position="93"/>
    </location>
    <ligand>
        <name>GTP</name>
        <dbReference type="ChEBI" id="CHEBI:37565"/>
    </ligand>
</feature>
<feature type="binding site" evidence="3">
    <location>
        <begin position="111"/>
        <end position="115"/>
    </location>
    <ligand>
        <name>GTP</name>
        <dbReference type="ChEBI" id="CHEBI:37565"/>
    </ligand>
</feature>
<feature type="binding site" evidence="3">
    <location>
        <begin position="193"/>
        <end position="195"/>
    </location>
    <ligand>
        <name>GTP</name>
        <dbReference type="ChEBI" id="CHEBI:37565"/>
    </ligand>
</feature>
<feature type="binding site" evidence="3">
    <location>
        <begin position="234"/>
        <end position="236"/>
    </location>
    <ligand>
        <name>GTP</name>
        <dbReference type="ChEBI" id="CHEBI:37565"/>
    </ligand>
</feature>
<feature type="modified residue" description="Phosphoserine" evidence="2">
    <location>
        <position position="204"/>
    </location>
</feature>
<feature type="cross-link" description="Glycyl lysine isopeptide (Lys-Gly) (interchain with G-Cter in ubiquitin)" evidence="2">
    <location>
        <position position="272"/>
    </location>
</feature>
<reference key="1">
    <citation type="journal article" date="2004" name="Genome Res.">
        <title>The status, quality, and expansion of the NIH full-length cDNA project: the Mammalian Gene Collection (MGC).</title>
        <authorList>
            <consortium name="The MGC Project Team"/>
        </authorList>
    </citation>
    <scope>NUCLEOTIDE SEQUENCE [LARGE SCALE MRNA]</scope>
    <source>
        <tissue>Lung</tissue>
    </source>
</reference>